<reference key="1">
    <citation type="journal article" date="1986" name="Nucleic Acids Res.">
        <title>Nucleotide sequence and analysis of the 58.3 to 65.5-kb early region of bacteriophage T4.</title>
        <authorList>
            <person name="Valerie K."/>
            <person name="Stevens J."/>
            <person name="Lynch M."/>
            <person name="Henderson E.E."/>
            <person name="de Riel J.K."/>
        </authorList>
    </citation>
    <scope>NUCLEOTIDE SEQUENCE [GENOMIC DNA]</scope>
</reference>
<reference key="2">
    <citation type="journal article" date="2003" name="Microbiol. Mol. Biol. Rev.">
        <title>Bacteriophage T4 genome.</title>
        <authorList>
            <person name="Miller E.S."/>
            <person name="Kutter E."/>
            <person name="Mosig G."/>
            <person name="Arisaka F."/>
            <person name="Kunisawa T."/>
            <person name="Ruger W."/>
        </authorList>
    </citation>
    <scope>NUCLEOTIDE SEQUENCE [LARGE SCALE GENOMIC DNA]</scope>
</reference>
<keyword id="KW-1185">Reference proteome</keyword>
<sequence length="92" mass="10904">MAQLSAGFGYEYYTAPRRVSVAPKKIQSLDDFQEVVRNAFQDYARYLKEDSQDCLEEDEIAYYTQRLEQLKNLHEVRAEVSKSMNKLIRFKE</sequence>
<proteinExistence type="predicted"/>
<gene>
    <name type="primary">y06F</name>
    <name type="synonym">62.2</name>
    <name type="synonym">vs.3</name>
</gene>
<protein>
    <recommendedName>
        <fullName>Uncharacterized 10.9 kDa protein in regB-denV intergenic region</fullName>
    </recommendedName>
</protein>
<organism>
    <name type="scientific">Enterobacteria phage T4</name>
    <name type="common">Bacteriophage T4</name>
    <dbReference type="NCBI Taxonomy" id="10665"/>
    <lineage>
        <taxon>Viruses</taxon>
        <taxon>Duplodnaviria</taxon>
        <taxon>Heunggongvirae</taxon>
        <taxon>Uroviricota</taxon>
        <taxon>Caudoviricetes</taxon>
        <taxon>Straboviridae</taxon>
        <taxon>Tevenvirinae</taxon>
        <taxon>Tequatrovirus</taxon>
    </lineage>
</organism>
<name>Y06F_BPT4</name>
<dbReference type="EMBL" id="X04567">
    <property type="protein sequence ID" value="CAA28226.1"/>
    <property type="molecule type" value="Genomic_DNA"/>
</dbReference>
<dbReference type="EMBL" id="AF158101">
    <property type="protein sequence ID" value="AAD42673.1"/>
    <property type="molecule type" value="Genomic_DNA"/>
</dbReference>
<dbReference type="RefSeq" id="NP_049727.1">
    <property type="nucleotide sequence ID" value="NC_000866.4"/>
</dbReference>
<dbReference type="SMR" id="P13313"/>
<dbReference type="GeneID" id="1258747"/>
<dbReference type="KEGG" id="vg:1258747"/>
<dbReference type="OrthoDB" id="19016at10239"/>
<dbReference type="Proteomes" id="UP000009087">
    <property type="component" value="Segment"/>
</dbReference>
<organismHost>
    <name type="scientific">Escherichia coli</name>
    <dbReference type="NCBI Taxonomy" id="562"/>
</organismHost>
<feature type="chain" id="PRO_0000165138" description="Uncharacterized 10.9 kDa protein in regB-denV intergenic region">
    <location>
        <begin position="1"/>
        <end position="92"/>
    </location>
</feature>
<accession>P13313</accession>